<dbReference type="EMBL" id="U00030">
    <property type="protein sequence ID" value="AAB68359.1"/>
    <property type="molecule type" value="Genomic_DNA"/>
</dbReference>
<dbReference type="EMBL" id="BK006934">
    <property type="protein sequence ID" value="DAA06884.1"/>
    <property type="molecule type" value="Genomic_DNA"/>
</dbReference>
<dbReference type="PIR" id="S46681">
    <property type="entry name" value="S46681"/>
</dbReference>
<dbReference type="RefSeq" id="NP_012062.1">
    <property type="nucleotide sequence ID" value="NM_001179323.1"/>
</dbReference>
<dbReference type="BioGRID" id="36626">
    <property type="interactions" value="88"/>
</dbReference>
<dbReference type="DIP" id="DIP-7382N"/>
<dbReference type="FunCoup" id="P38878">
    <property type="interactions" value="45"/>
</dbReference>
<dbReference type="IntAct" id="P38878">
    <property type="interactions" value="5"/>
</dbReference>
<dbReference type="STRING" id="4932.YHR192W"/>
<dbReference type="TCDB" id="8.A.109.1.1">
    <property type="family name" value="the endoplasmic reticulum junction-forming protein (lunapark) family"/>
</dbReference>
<dbReference type="iPTMnet" id="P38878"/>
<dbReference type="PaxDb" id="4932-YHR192W"/>
<dbReference type="PeptideAtlas" id="P38878"/>
<dbReference type="EnsemblFungi" id="YHR192W_mRNA">
    <property type="protein sequence ID" value="YHR192W"/>
    <property type="gene ID" value="YHR192W"/>
</dbReference>
<dbReference type="GeneID" id="856599"/>
<dbReference type="KEGG" id="sce:YHR192W"/>
<dbReference type="AGR" id="SGD:S000001235"/>
<dbReference type="SGD" id="S000001235">
    <property type="gene designation" value="LNP1"/>
</dbReference>
<dbReference type="VEuPathDB" id="FungiDB:YHR192W"/>
<dbReference type="eggNOG" id="KOG2846">
    <property type="taxonomic scope" value="Eukaryota"/>
</dbReference>
<dbReference type="HOGENOM" id="CLU_089708_0_0_1"/>
<dbReference type="InParanoid" id="P38878"/>
<dbReference type="OMA" id="ILFKWAL"/>
<dbReference type="OrthoDB" id="1725934at2759"/>
<dbReference type="BioCyc" id="YEAST:G3O-31220-MONOMER"/>
<dbReference type="BioGRID-ORCS" id="856599">
    <property type="hits" value="0 hits in 10 CRISPR screens"/>
</dbReference>
<dbReference type="ChiTaRS" id="LNP1">
    <property type="organism name" value="yeast"/>
</dbReference>
<dbReference type="PRO" id="PR:P38878"/>
<dbReference type="Proteomes" id="UP000002311">
    <property type="component" value="Chromosome VIII"/>
</dbReference>
<dbReference type="RNAct" id="P38878">
    <property type="molecule type" value="protein"/>
</dbReference>
<dbReference type="GO" id="GO:0005737">
    <property type="term" value="C:cytoplasm"/>
    <property type="evidence" value="ECO:0007005"/>
    <property type="project" value="SGD"/>
</dbReference>
<dbReference type="GO" id="GO:0005783">
    <property type="term" value="C:endoplasmic reticulum"/>
    <property type="evidence" value="ECO:0007005"/>
    <property type="project" value="SGD"/>
</dbReference>
<dbReference type="GO" id="GO:0005789">
    <property type="term" value="C:endoplasmic reticulum membrane"/>
    <property type="evidence" value="ECO:0007669"/>
    <property type="project" value="UniProtKB-SubCell"/>
</dbReference>
<dbReference type="GO" id="GO:0071782">
    <property type="term" value="C:endoplasmic reticulum tubular network"/>
    <property type="evidence" value="ECO:0000314"/>
    <property type="project" value="SGD"/>
</dbReference>
<dbReference type="GO" id="GO:0008270">
    <property type="term" value="F:zinc ion binding"/>
    <property type="evidence" value="ECO:0007669"/>
    <property type="project" value="UniProtKB-KW"/>
</dbReference>
<dbReference type="GO" id="GO:0071786">
    <property type="term" value="P:endoplasmic reticulum tubular network organization"/>
    <property type="evidence" value="ECO:0000315"/>
    <property type="project" value="SGD"/>
</dbReference>
<dbReference type="GO" id="GO:0006999">
    <property type="term" value="P:nuclear pore organization"/>
    <property type="evidence" value="ECO:0000316"/>
    <property type="project" value="CACAO"/>
</dbReference>
<dbReference type="GO" id="GO:0034976">
    <property type="term" value="P:response to endoplasmic reticulum stress"/>
    <property type="evidence" value="ECO:0000316"/>
    <property type="project" value="SGD"/>
</dbReference>
<dbReference type="GO" id="GO:0061709">
    <property type="term" value="P:reticulophagy"/>
    <property type="evidence" value="ECO:0000315"/>
    <property type="project" value="SGD"/>
</dbReference>
<dbReference type="InterPro" id="IPR040115">
    <property type="entry name" value="Lnp"/>
</dbReference>
<dbReference type="InterPro" id="IPR019273">
    <property type="entry name" value="Lunapark_Znf"/>
</dbReference>
<dbReference type="PANTHER" id="PTHR22166">
    <property type="entry name" value="ENDOPLASMIC RETICULUM JUNCTION FORMATION PROTEIN LUNAPARK"/>
    <property type="match status" value="1"/>
</dbReference>
<dbReference type="PANTHER" id="PTHR22166:SF12">
    <property type="entry name" value="ENDOPLASMIC RETICULUM JUNCTION FORMATION PROTEIN LUNAPARK"/>
    <property type="match status" value="1"/>
</dbReference>
<dbReference type="Pfam" id="PF10058">
    <property type="entry name" value="Zn_ribbon_10"/>
    <property type="match status" value="1"/>
</dbReference>
<reference key="1">
    <citation type="journal article" date="1994" name="Science">
        <title>Complete nucleotide sequence of Saccharomyces cerevisiae chromosome VIII.</title>
        <authorList>
            <person name="Johnston M."/>
            <person name="Andrews S."/>
            <person name="Brinkman R."/>
            <person name="Cooper J."/>
            <person name="Ding H."/>
            <person name="Dover J."/>
            <person name="Du Z."/>
            <person name="Favello A."/>
            <person name="Fulton L."/>
            <person name="Gattung S."/>
            <person name="Geisel C."/>
            <person name="Kirsten J."/>
            <person name="Kucaba T."/>
            <person name="Hillier L.W."/>
            <person name="Jier M."/>
            <person name="Johnston L."/>
            <person name="Langston Y."/>
            <person name="Latreille P."/>
            <person name="Louis E.J."/>
            <person name="Macri C."/>
            <person name="Mardis E."/>
            <person name="Menezes S."/>
            <person name="Mouser L."/>
            <person name="Nhan M."/>
            <person name="Rifkin L."/>
            <person name="Riles L."/>
            <person name="St Peter H."/>
            <person name="Trevaskis E."/>
            <person name="Vaughan K."/>
            <person name="Vignati D."/>
            <person name="Wilcox L."/>
            <person name="Wohldman P."/>
            <person name="Waterston R."/>
            <person name="Wilson R."/>
            <person name="Vaudin M."/>
        </authorList>
    </citation>
    <scope>NUCLEOTIDE SEQUENCE [LARGE SCALE GENOMIC DNA]</scope>
    <source>
        <strain>ATCC 204508 / S288c</strain>
    </source>
</reference>
<reference key="2">
    <citation type="journal article" date="2014" name="G3 (Bethesda)">
        <title>The reference genome sequence of Saccharomyces cerevisiae: Then and now.</title>
        <authorList>
            <person name="Engel S.R."/>
            <person name="Dietrich F.S."/>
            <person name="Fisk D.G."/>
            <person name="Binkley G."/>
            <person name="Balakrishnan R."/>
            <person name="Costanzo M.C."/>
            <person name="Dwight S.S."/>
            <person name="Hitz B.C."/>
            <person name="Karra K."/>
            <person name="Nash R.S."/>
            <person name="Weng S."/>
            <person name="Wong E.D."/>
            <person name="Lloyd P."/>
            <person name="Skrzypek M.S."/>
            <person name="Miyasato S.R."/>
            <person name="Simison M."/>
            <person name="Cherry J.M."/>
        </authorList>
    </citation>
    <scope>GENOME REANNOTATION</scope>
    <source>
        <strain>ATCC 204508 / S288c</strain>
    </source>
</reference>
<reference key="3">
    <citation type="journal article" date="2003" name="Nature">
        <title>Global analysis of protein expression in yeast.</title>
        <authorList>
            <person name="Ghaemmaghami S."/>
            <person name="Huh W.-K."/>
            <person name="Bower K."/>
            <person name="Howson R.W."/>
            <person name="Belle A."/>
            <person name="Dephoure N."/>
            <person name="O'Shea E.K."/>
            <person name="Weissman J.S."/>
        </authorList>
    </citation>
    <scope>LEVEL OF PROTEIN EXPRESSION [LARGE SCALE ANALYSIS]</scope>
</reference>
<reference key="4">
    <citation type="journal article" date="2006" name="Proc. Natl. Acad. Sci. U.S.A.">
        <title>A global topology map of the Saccharomyces cerevisiae membrane proteome.</title>
        <authorList>
            <person name="Kim H."/>
            <person name="Melen K."/>
            <person name="Oesterberg M."/>
            <person name="von Heijne G."/>
        </authorList>
    </citation>
    <scope>TOPOLOGY [LARGE SCALE ANALYSIS]</scope>
    <source>
        <strain>ATCC 208353 / W303-1A</strain>
    </source>
</reference>
<reference key="5">
    <citation type="journal article" date="2009" name="Science">
        <title>Global analysis of Cdk1 substrate phosphorylation sites provides insights into evolution.</title>
        <authorList>
            <person name="Holt L.J."/>
            <person name="Tuch B.B."/>
            <person name="Villen J."/>
            <person name="Johnson A.D."/>
            <person name="Gygi S.P."/>
            <person name="Morgan D.O."/>
        </authorList>
    </citation>
    <scope>IDENTIFICATION BY MASS SPECTROMETRY [LARGE SCALE ANALYSIS]</scope>
</reference>
<reference key="6">
    <citation type="journal article" date="2012" name="Nat. Cell Biol.">
        <title>ER network formation requires a balance of the dynamin-like GTPase Sey1p and the Lunapark family member Lnp1p.</title>
        <authorList>
            <person name="Chen S."/>
            <person name="Novick P."/>
            <person name="Ferro-Novick S."/>
        </authorList>
    </citation>
    <scope>FUNCTION</scope>
    <scope>SUBCELLULAR LOCATION</scope>
    <scope>INTERACTION WITH RTN1</scope>
    <scope>MUTAGENESIS OF CYS-223; CYS-226; CYS-244 AND CYS-247</scope>
</reference>
<comment type="function">
    <text evidence="5">Plays a role in tubular endoplasmic reticulum network formation and maintenance. Works in conjunction with the ER shaping proteins (reticulons RTN1 and RTN2, YOP1), and in antagonism to SEY1 to maintain the network in a dynamic equilibrium. May counterbalance SEY1-directed polygon formation by promoting polygon loss through ring closure.</text>
</comment>
<comment type="subunit">
    <text evidence="5">Interacts with RTN1; this interaction is negatively regulated by SEY1. Interacts with SEY1 and YOP1.</text>
</comment>
<comment type="subcellular location">
    <subcellularLocation>
        <location evidence="5">Endoplasmic reticulum membrane</location>
        <topology evidence="5">Multi-pass membrane protein</topology>
    </subcellularLocation>
    <text>Localizes to three-way ER tubule junctions. This localization is SEY1-dependent.</text>
</comment>
<comment type="miscellaneous">
    <text evidence="4">Present with 3390 molecules/cell in log phase SD medium.</text>
</comment>
<comment type="similarity">
    <text evidence="6">Belongs to the lunapark family.</text>
</comment>
<accession>P38878</accession>
<accession>D3DLE0</accession>
<gene>
    <name type="primary">LNP1</name>
    <name type="ordered locus">YHR192W</name>
</gene>
<keyword id="KW-0175">Coiled coil</keyword>
<keyword id="KW-0256">Endoplasmic reticulum</keyword>
<keyword id="KW-0472">Membrane</keyword>
<keyword id="KW-0479">Metal-binding</keyword>
<keyword id="KW-1185">Reference proteome</keyword>
<keyword id="KW-0812">Transmembrane</keyword>
<keyword id="KW-1133">Transmembrane helix</keyword>
<keyword id="KW-0862">Zinc</keyword>
<keyword id="KW-0863">Zinc-finger</keyword>
<name>LNP_YEAST</name>
<sequence length="278" mass="32063">MFSALGKWVRGSRNDKDFVTKYTADLSQITSQIHQLDVALKKSQSILSQWQSNLTFYGIALTVLALSYTYWEYHGYRPYLVVTALLCIGSLILFKWALTKLYAFYNNNRLRKLAKLRAIHQKKLEKLKEETHYNATSSIIQRFSSGEDQNDDAMVLLDDELNAKYQELNNLKTELEKFKKESHVKGLKKEDSDAWFDKIISVLAGGNELDSTSSLSPFKKIICPQCHWKSNCYRLASKPIIFICPHCNHKIDEVKEREDAIEAKQPAQPSQSEKEKTK</sequence>
<evidence type="ECO:0000250" key="1">
    <source>
        <dbReference type="UniProtKB" id="Q9C0E8"/>
    </source>
</evidence>
<evidence type="ECO:0000255" key="2"/>
<evidence type="ECO:0000256" key="3">
    <source>
        <dbReference type="SAM" id="MobiDB-lite"/>
    </source>
</evidence>
<evidence type="ECO:0000269" key="4">
    <source>
    </source>
</evidence>
<evidence type="ECO:0000269" key="5">
    <source>
    </source>
</evidence>
<evidence type="ECO:0000305" key="6"/>
<protein>
    <recommendedName>
        <fullName evidence="6">Endoplasmic reticulum junction formation protein lunapark</fullName>
    </recommendedName>
    <alternativeName>
        <fullName evidence="1">ER junction formation factor lunapark</fullName>
    </alternativeName>
</protein>
<proteinExistence type="evidence at protein level"/>
<feature type="chain" id="PRO_0000202936" description="Endoplasmic reticulum junction formation protein lunapark">
    <location>
        <begin position="1"/>
        <end position="278"/>
    </location>
</feature>
<feature type="topological domain" description="Cytoplasmic" evidence="2">
    <location>
        <begin position="1"/>
        <end position="45"/>
    </location>
</feature>
<feature type="transmembrane region" description="Helical" evidence="2">
    <location>
        <begin position="46"/>
        <end position="66"/>
    </location>
</feature>
<feature type="topological domain" description="Lumenal" evidence="2">
    <location>
        <begin position="67"/>
        <end position="77"/>
    </location>
</feature>
<feature type="transmembrane region" description="Helical" evidence="2">
    <location>
        <begin position="78"/>
        <end position="98"/>
    </location>
</feature>
<feature type="topological domain" description="Cytoplasmic" evidence="2">
    <location>
        <begin position="99"/>
        <end position="278"/>
    </location>
</feature>
<feature type="zinc finger region" description="C4-type; plays a role in ER morphology">
    <location>
        <begin position="223"/>
        <end position="247"/>
    </location>
</feature>
<feature type="region of interest" description="Disordered" evidence="3">
    <location>
        <begin position="258"/>
        <end position="278"/>
    </location>
</feature>
<feature type="coiled-coil region" evidence="2">
    <location>
        <begin position="107"/>
        <end position="183"/>
    </location>
</feature>
<feature type="mutagenesis site" description="In lnp1-1; causes aberrant ER morphology; when associated with A-226, A-244 and A-247." evidence="5">
    <original>C</original>
    <variation>A</variation>
    <location>
        <position position="223"/>
    </location>
</feature>
<feature type="mutagenesis site" description="In lnp1-1; causes aberrant ER morphology; when associated with A-223, A-244 and A-247." evidence="5">
    <original>C</original>
    <variation>A</variation>
    <location>
        <position position="226"/>
    </location>
</feature>
<feature type="mutagenesis site" description="In lnp1-1; causes aberrant ER morphology; when associated with A-223, A-226 and A-247." evidence="5">
    <original>C</original>
    <variation>A</variation>
    <location>
        <position position="244"/>
    </location>
</feature>
<feature type="mutagenesis site" description="In lnp1-1; causes aberrant ER morphology; when associated with A-223, A-226 and A-244." evidence="5">
    <original>C</original>
    <variation>A</variation>
    <location>
        <position position="247"/>
    </location>
</feature>
<organism>
    <name type="scientific">Saccharomyces cerevisiae (strain ATCC 204508 / S288c)</name>
    <name type="common">Baker's yeast</name>
    <dbReference type="NCBI Taxonomy" id="559292"/>
    <lineage>
        <taxon>Eukaryota</taxon>
        <taxon>Fungi</taxon>
        <taxon>Dikarya</taxon>
        <taxon>Ascomycota</taxon>
        <taxon>Saccharomycotina</taxon>
        <taxon>Saccharomycetes</taxon>
        <taxon>Saccharomycetales</taxon>
        <taxon>Saccharomycetaceae</taxon>
        <taxon>Saccharomyces</taxon>
    </lineage>
</organism>